<accession>Q8BG84</accession>
<accession>Q80UN5</accession>
<accession>Q8BHB6</accession>
<accession>Q8BRR6</accession>
<accession>Q8C6N8</accession>
<accession>Q8CEP5</accession>
<sequence length="263" mass="29793">MSLHPVILLVLVLCLGWKINTQEGSLPDITIFPNSSLMISQGTFVTVVCSYSDKHDLYNMVRLEKDGSTFMEKSTEPYKTEDEFEIGPVNETITGHYSCIYSKGITWSERSKTLELKVIKENVIQTPAPGPTSDTSWLKTYSIYIFTVVSVIFLLCLSALLFCFLRHRQKKQGLPNNKRQQQRPEERLNLATNGLEMTPDIVADDRLPEDRWTETWTPVAGDLQEVTYIQLDHHSLTQRAVGAVTSQSTDMAESSTYAAIIRH</sequence>
<reference key="1">
    <citation type="journal article" date="2004" name="J. Immunol.">
        <title>The mouse homologue of the leukocyte-associated Ig-like receptor-1 is an inhibitory receptor that recruits Src homology region 2-containing protein tyrosine phosphatase (SHP)-2, but not SHP-1.</title>
        <authorList>
            <person name="Lebbink R.J."/>
            <person name="de Ruiter T."/>
            <person name="Verbrugge A."/>
            <person name="Bril W.S."/>
            <person name="Meyaard L."/>
        </authorList>
    </citation>
    <scope>NUCLEOTIDE SEQUENCE [MRNA] (ISOFORMS 1; 2; 5 AND 6)</scope>
    <scope>TISSUE SPECIFICITY</scope>
    <scope>FUNCTION</scope>
    <scope>DOMAIN ITIM MOTIF</scope>
    <scope>INTERACTION WITH PTPN11</scope>
</reference>
<reference key="2">
    <citation type="journal article" date="2005" name="Science">
        <title>The transcriptional landscape of the mammalian genome.</title>
        <authorList>
            <person name="Carninci P."/>
            <person name="Kasukawa T."/>
            <person name="Katayama S."/>
            <person name="Gough J."/>
            <person name="Frith M.C."/>
            <person name="Maeda N."/>
            <person name="Oyama R."/>
            <person name="Ravasi T."/>
            <person name="Lenhard B."/>
            <person name="Wells C."/>
            <person name="Kodzius R."/>
            <person name="Shimokawa K."/>
            <person name="Bajic V.B."/>
            <person name="Brenner S.E."/>
            <person name="Batalov S."/>
            <person name="Forrest A.R."/>
            <person name="Zavolan M."/>
            <person name="Davis M.J."/>
            <person name="Wilming L.G."/>
            <person name="Aidinis V."/>
            <person name="Allen J.E."/>
            <person name="Ambesi-Impiombato A."/>
            <person name="Apweiler R."/>
            <person name="Aturaliya R.N."/>
            <person name="Bailey T.L."/>
            <person name="Bansal M."/>
            <person name="Baxter L."/>
            <person name="Beisel K.W."/>
            <person name="Bersano T."/>
            <person name="Bono H."/>
            <person name="Chalk A.M."/>
            <person name="Chiu K.P."/>
            <person name="Choudhary V."/>
            <person name="Christoffels A."/>
            <person name="Clutterbuck D.R."/>
            <person name="Crowe M.L."/>
            <person name="Dalla E."/>
            <person name="Dalrymple B.P."/>
            <person name="de Bono B."/>
            <person name="Della Gatta G."/>
            <person name="di Bernardo D."/>
            <person name="Down T."/>
            <person name="Engstrom P."/>
            <person name="Fagiolini M."/>
            <person name="Faulkner G."/>
            <person name="Fletcher C.F."/>
            <person name="Fukushima T."/>
            <person name="Furuno M."/>
            <person name="Futaki S."/>
            <person name="Gariboldi M."/>
            <person name="Georgii-Hemming P."/>
            <person name="Gingeras T.R."/>
            <person name="Gojobori T."/>
            <person name="Green R.E."/>
            <person name="Gustincich S."/>
            <person name="Harbers M."/>
            <person name="Hayashi Y."/>
            <person name="Hensch T.K."/>
            <person name="Hirokawa N."/>
            <person name="Hill D."/>
            <person name="Huminiecki L."/>
            <person name="Iacono M."/>
            <person name="Ikeo K."/>
            <person name="Iwama A."/>
            <person name="Ishikawa T."/>
            <person name="Jakt M."/>
            <person name="Kanapin A."/>
            <person name="Katoh M."/>
            <person name="Kawasawa Y."/>
            <person name="Kelso J."/>
            <person name="Kitamura H."/>
            <person name="Kitano H."/>
            <person name="Kollias G."/>
            <person name="Krishnan S.P."/>
            <person name="Kruger A."/>
            <person name="Kummerfeld S.K."/>
            <person name="Kurochkin I.V."/>
            <person name="Lareau L.F."/>
            <person name="Lazarevic D."/>
            <person name="Lipovich L."/>
            <person name="Liu J."/>
            <person name="Liuni S."/>
            <person name="McWilliam S."/>
            <person name="Madan Babu M."/>
            <person name="Madera M."/>
            <person name="Marchionni L."/>
            <person name="Matsuda H."/>
            <person name="Matsuzawa S."/>
            <person name="Miki H."/>
            <person name="Mignone F."/>
            <person name="Miyake S."/>
            <person name="Morris K."/>
            <person name="Mottagui-Tabar S."/>
            <person name="Mulder N."/>
            <person name="Nakano N."/>
            <person name="Nakauchi H."/>
            <person name="Ng P."/>
            <person name="Nilsson R."/>
            <person name="Nishiguchi S."/>
            <person name="Nishikawa S."/>
            <person name="Nori F."/>
            <person name="Ohara O."/>
            <person name="Okazaki Y."/>
            <person name="Orlando V."/>
            <person name="Pang K.C."/>
            <person name="Pavan W.J."/>
            <person name="Pavesi G."/>
            <person name="Pesole G."/>
            <person name="Petrovsky N."/>
            <person name="Piazza S."/>
            <person name="Reed J."/>
            <person name="Reid J.F."/>
            <person name="Ring B.Z."/>
            <person name="Ringwald M."/>
            <person name="Rost B."/>
            <person name="Ruan Y."/>
            <person name="Salzberg S.L."/>
            <person name="Sandelin A."/>
            <person name="Schneider C."/>
            <person name="Schoenbach C."/>
            <person name="Sekiguchi K."/>
            <person name="Semple C.A."/>
            <person name="Seno S."/>
            <person name="Sessa L."/>
            <person name="Sheng Y."/>
            <person name="Shibata Y."/>
            <person name="Shimada H."/>
            <person name="Shimada K."/>
            <person name="Silva D."/>
            <person name="Sinclair B."/>
            <person name="Sperling S."/>
            <person name="Stupka E."/>
            <person name="Sugiura K."/>
            <person name="Sultana R."/>
            <person name="Takenaka Y."/>
            <person name="Taki K."/>
            <person name="Tammoja K."/>
            <person name="Tan S.L."/>
            <person name="Tang S."/>
            <person name="Taylor M.S."/>
            <person name="Tegner J."/>
            <person name="Teichmann S.A."/>
            <person name="Ueda H.R."/>
            <person name="van Nimwegen E."/>
            <person name="Verardo R."/>
            <person name="Wei C.L."/>
            <person name="Yagi K."/>
            <person name="Yamanishi H."/>
            <person name="Zabarovsky E."/>
            <person name="Zhu S."/>
            <person name="Zimmer A."/>
            <person name="Hide W."/>
            <person name="Bult C."/>
            <person name="Grimmond S.M."/>
            <person name="Teasdale R.D."/>
            <person name="Liu E.T."/>
            <person name="Brusic V."/>
            <person name="Quackenbush J."/>
            <person name="Wahlestedt C."/>
            <person name="Mattick J.S."/>
            <person name="Hume D.A."/>
            <person name="Kai C."/>
            <person name="Sasaki D."/>
            <person name="Tomaru Y."/>
            <person name="Fukuda S."/>
            <person name="Kanamori-Katayama M."/>
            <person name="Suzuki M."/>
            <person name="Aoki J."/>
            <person name="Arakawa T."/>
            <person name="Iida J."/>
            <person name="Imamura K."/>
            <person name="Itoh M."/>
            <person name="Kato T."/>
            <person name="Kawaji H."/>
            <person name="Kawagashira N."/>
            <person name="Kawashima T."/>
            <person name="Kojima M."/>
            <person name="Kondo S."/>
            <person name="Konno H."/>
            <person name="Nakano K."/>
            <person name="Ninomiya N."/>
            <person name="Nishio T."/>
            <person name="Okada M."/>
            <person name="Plessy C."/>
            <person name="Shibata K."/>
            <person name="Shiraki T."/>
            <person name="Suzuki S."/>
            <person name="Tagami M."/>
            <person name="Waki K."/>
            <person name="Watahiki A."/>
            <person name="Okamura-Oho Y."/>
            <person name="Suzuki H."/>
            <person name="Kawai J."/>
            <person name="Hayashizaki Y."/>
        </authorList>
    </citation>
    <scope>NUCLEOTIDE SEQUENCE [LARGE SCALE MRNA] (ISOFORMS 1; 2 AND 3)</scope>
    <source>
        <strain>C57BL/6J</strain>
        <tissue>Brain cortex</tissue>
        <tissue>Colon</tissue>
        <tissue>Hypothalamus</tissue>
        <tissue>Intestine</tissue>
        <tissue>Liver</tissue>
        <tissue>Oviduct</tissue>
        <tissue>Retina</tissue>
    </source>
</reference>
<reference key="3">
    <citation type="journal article" date="2004" name="Genome Res.">
        <title>The status, quality, and expansion of the NIH full-length cDNA project: the Mammalian Gene Collection (MGC).</title>
        <authorList>
            <consortium name="The MGC Project Team"/>
        </authorList>
    </citation>
    <scope>NUCLEOTIDE SEQUENCE [LARGE SCALE MRNA] (ISOFORM 1)</scope>
    <source>
        <strain>C57BL/6J</strain>
        <strain>FVB/N</strain>
        <tissue>Mammary gland</tissue>
    </source>
</reference>
<reference key="4">
    <citation type="journal article" date="2006" name="Eur. J. Immunol.">
        <title>Leukocyte-associated Ig-like receptor-1 has SH2 domain-containing phosphatase-independent function and recruits C-terminal Src kinase.</title>
        <authorList>
            <person name="Verbrugge A."/>
            <person name="Rijkers E.S.K."/>
            <person name="de Ruiter T."/>
            <person name="Meyaard L."/>
        </authorList>
    </citation>
    <scope>INTERACTION WITH CSK</scope>
</reference>
<organism>
    <name type="scientific">Mus musculus</name>
    <name type="common">Mouse</name>
    <dbReference type="NCBI Taxonomy" id="10090"/>
    <lineage>
        <taxon>Eukaryota</taxon>
        <taxon>Metazoa</taxon>
        <taxon>Chordata</taxon>
        <taxon>Craniata</taxon>
        <taxon>Vertebrata</taxon>
        <taxon>Euteleostomi</taxon>
        <taxon>Mammalia</taxon>
        <taxon>Eutheria</taxon>
        <taxon>Euarchontoglires</taxon>
        <taxon>Glires</taxon>
        <taxon>Rodentia</taxon>
        <taxon>Myomorpha</taxon>
        <taxon>Muroidea</taxon>
        <taxon>Muridae</taxon>
        <taxon>Murinae</taxon>
        <taxon>Mus</taxon>
        <taxon>Mus</taxon>
    </lineage>
</organism>
<evidence type="ECO:0000250" key="1"/>
<evidence type="ECO:0000250" key="2">
    <source>
        <dbReference type="UniProtKB" id="Q6GTX8"/>
    </source>
</evidence>
<evidence type="ECO:0000255" key="3"/>
<evidence type="ECO:0000255" key="4">
    <source>
        <dbReference type="PROSITE-ProRule" id="PRU00114"/>
    </source>
</evidence>
<evidence type="ECO:0000269" key="5">
    <source>
    </source>
</evidence>
<evidence type="ECO:0000303" key="6">
    <source>
    </source>
</evidence>
<evidence type="ECO:0000303" key="7">
    <source>
    </source>
</evidence>
<evidence type="ECO:0000305" key="8"/>
<evidence type="ECO:0007829" key="9">
    <source>
        <dbReference type="PDB" id="4ESK"/>
    </source>
</evidence>
<comment type="function">
    <text evidence="1 5">Functions as an inhibitory receptor that plays a constitutive negative regulatory role on cytolytic function of natural killer (NK) cells, B-cells and T-cells. Activation by Tyr phosphorylation results in recruitment and activation of the phosphatases PTPN6 and PTPN11. It also reduces the increase of intracellular calcium evoked by B-cell receptor ligation. May also play its inhibitory role independently of SH2-containing phosphatases. Modulates cytokine production in CD4+ T-cells, down-regulating IL2 and IFNG production while inducing secretion of transforming growth factor beta. Also down-regulates IgG and IgE production in B-cells as well as IL8, IL10 and TNF secretion. Inhibits proliferation and induces apoptosis in myeloid leukemia cell lines as well as prevents nuclear translocation of NF-kappa-B p65 subunit/RELA and phosphorylation of I-kappa-B alpha/CHUK in these cells. Inhibits the differentiation of peripheral blood precursors towards dendritic cells (By similarity).</text>
</comment>
<comment type="subunit">
    <text evidence="1">Interacts with SH2 domains of tyrosine-protein phosphatases PTPN6 and PTPN11. The interaction with PTPN6 is constitutive. Interacts with the SH2 domain of CSK. Binds with high affinity to extracellular matrix collagens, the interaction is functionally important (By similarity).</text>
</comment>
<comment type="subcellular location">
    <subcellularLocation>
        <location evidence="1">Cell membrane</location>
        <topology evidence="1">Single-pass type I membrane protein</topology>
    </subcellularLocation>
</comment>
<comment type="alternative products">
    <event type="alternative splicing"/>
    <isoform>
        <id>Q8BG84-1</id>
        <name>1</name>
        <name>mLair-1a</name>
        <sequence type="displayed"/>
    </isoform>
    <isoform>
        <id>Q8BG84-2</id>
        <name>2</name>
        <name>mLair-1b</name>
        <sequence type="described" ref="VSP_020716"/>
    </isoform>
    <isoform>
        <id>Q8BG84-3</id>
        <name>3</name>
        <sequence type="described" ref="VSP_020714 VSP_020719"/>
    </isoform>
    <isoform>
        <id>Q8BG84-5</id>
        <name>5</name>
        <name>mLair-1d</name>
        <sequence type="described" ref="VSP_020715"/>
    </isoform>
    <isoform>
        <id>Q8BG84-6</id>
        <name>6</name>
        <name>mLair-1e</name>
        <sequence type="described" ref="VSP_020718"/>
    </isoform>
</comment>
<comment type="tissue specificity">
    <text evidence="5">Expressed in lymphoid organs and in cell lines of hemopoietic origin.</text>
</comment>
<comment type="domain">
    <text evidence="5">ITIM (immunoreceptor tyrosine-based inhibitor motif) motif is a cytoplasmic motif present in 2 copies in the intracellular part of LAIR1. When phosphorylated, ITIM motif can bind the SH2 domain of several SH2-containing phosphatases, leading to down-regulation of cell activation.</text>
</comment>
<comment type="PTM">
    <text evidence="1">Phosphorylation at Tyr-228 and Tyr-257 activates it. May be phosphorylated by LCK (By similarity).</text>
</comment>
<comment type="PTM">
    <text evidence="1">N-glycosylated.</text>
</comment>
<comment type="miscellaneous">
    <molecule>Isoform 3</molecule>
    <text evidence="8">May be produced at very low levels due to a premature stop codon in the mRNA, leading to nonsense-mediated mRNA decay.</text>
</comment>
<comment type="sequence caution" evidence="8">
    <conflict type="frameshift">
        <sequence resource="EMBL-CDS" id="BAC25505"/>
    </conflict>
</comment>
<comment type="sequence caution" evidence="8">
    <conflict type="erroneous translation">
        <sequence resource="EMBL-CDS" id="BAC31610"/>
    </conflict>
    <text>Wrong choice of frame.</text>
</comment>
<comment type="sequence caution" evidence="8">
    <conflict type="erroneous translation">
        <sequence resource="EMBL-CDS" id="BAC35674"/>
    </conflict>
    <text>Wrong choice of frame.</text>
</comment>
<keyword id="KW-0002">3D-structure</keyword>
<keyword id="KW-0025">Alternative splicing</keyword>
<keyword id="KW-1003">Cell membrane</keyword>
<keyword id="KW-1015">Disulfide bond</keyword>
<keyword id="KW-0325">Glycoprotein</keyword>
<keyword id="KW-0393">Immunoglobulin domain</keyword>
<keyword id="KW-0472">Membrane</keyword>
<keyword id="KW-0597">Phosphoprotein</keyword>
<keyword id="KW-0675">Receptor</keyword>
<keyword id="KW-1185">Reference proteome</keyword>
<keyword id="KW-0732">Signal</keyword>
<keyword id="KW-0812">Transmembrane</keyword>
<keyword id="KW-1133">Transmembrane helix</keyword>
<proteinExistence type="evidence at protein level"/>
<gene>
    <name type="primary">Lair1</name>
</gene>
<feature type="signal peptide" evidence="3">
    <location>
        <begin position="1"/>
        <end position="21"/>
    </location>
</feature>
<feature type="chain" id="PRO_0000250683" description="Leukocyte-associated immunoglobulin-like receptor 1">
    <location>
        <begin position="22"/>
        <end position="263"/>
    </location>
</feature>
<feature type="topological domain" description="Extracellular" evidence="3">
    <location>
        <begin position="22"/>
        <end position="144"/>
    </location>
</feature>
<feature type="transmembrane region" description="Helical" evidence="3">
    <location>
        <begin position="145"/>
        <end position="165"/>
    </location>
</feature>
<feature type="topological domain" description="Cytoplasmic" evidence="3">
    <location>
        <begin position="166"/>
        <end position="263"/>
    </location>
</feature>
<feature type="domain" description="Ig-like C2-type">
    <location>
        <begin position="27"/>
        <end position="115"/>
    </location>
</feature>
<feature type="short sequence motif" description="ITIM motif 1">
    <location>
        <begin position="226"/>
        <end position="231"/>
    </location>
</feature>
<feature type="short sequence motif" description="ITIM motif 2">
    <location>
        <begin position="255"/>
        <end position="260"/>
    </location>
</feature>
<feature type="modified residue" description="Phosphotyrosine" evidence="2">
    <location>
        <position position="228"/>
    </location>
</feature>
<feature type="modified residue" description="Phosphotyrosine" evidence="2">
    <location>
        <position position="257"/>
    </location>
</feature>
<feature type="glycosylation site" description="N-linked (GlcNAc...) asparagine" evidence="3">
    <location>
        <position position="34"/>
    </location>
</feature>
<feature type="glycosylation site" description="N-linked (GlcNAc...) asparagine" evidence="3">
    <location>
        <position position="90"/>
    </location>
</feature>
<feature type="disulfide bond" evidence="4">
    <location>
        <begin position="49"/>
        <end position="99"/>
    </location>
</feature>
<feature type="splice variant" id="VSP_020715" description="In isoform 5." evidence="6">
    <location>
        <begin position="24"/>
        <end position="172"/>
    </location>
</feature>
<feature type="splice variant" id="VSP_020716" description="In isoform 2." evidence="6 7">
    <location>
        <begin position="24"/>
        <end position="133"/>
    </location>
</feature>
<feature type="splice variant" id="VSP_020714" description="In isoform 3." evidence="7">
    <original>SLPDITIFPNSSLMISQGTFVTVVCSYSDKHD</original>
    <variation>ELCLWFLLYPWATLELIMCTWDAWKETLEYFL</variation>
    <location>
        <begin position="25"/>
        <end position="56"/>
    </location>
</feature>
<feature type="splice variant" id="VSP_020719" description="In isoform 3." evidence="7">
    <location>
        <begin position="57"/>
        <end position="263"/>
    </location>
</feature>
<feature type="splice variant" id="VSP_020718" description="In isoform 6." evidence="6">
    <location>
        <begin position="134"/>
        <end position="172"/>
    </location>
</feature>
<feature type="sequence conflict" description="In Ref. 2; BAC25505." evidence="8" ref="2">
    <original>IYI</original>
    <variation>MYM</variation>
    <location>
        <begin position="143"/>
        <end position="145"/>
    </location>
</feature>
<feature type="sequence conflict" description="In Ref. 2; BAC25505." evidence="8" ref="2">
    <original>V</original>
    <variation>G</variation>
    <location>
        <position position="149"/>
    </location>
</feature>
<feature type="sequence conflict" description="In Ref. 2; BAC25505." evidence="8" ref="2">
    <original>L</original>
    <variation>P</variation>
    <location>
        <position position="154"/>
    </location>
</feature>
<feature type="sequence conflict" description="In Ref. 3; AAH25901." evidence="8" ref="3">
    <original>H</original>
    <variation>R</variation>
    <location>
        <position position="263"/>
    </location>
</feature>
<feature type="strand" evidence="9">
    <location>
        <begin position="28"/>
        <end position="32"/>
    </location>
</feature>
<feature type="strand" evidence="9">
    <location>
        <begin position="35"/>
        <end position="40"/>
    </location>
</feature>
<feature type="strand" evidence="9">
    <location>
        <begin position="45"/>
        <end position="50"/>
    </location>
</feature>
<feature type="turn" evidence="9">
    <location>
        <begin position="52"/>
        <end position="54"/>
    </location>
</feature>
<feature type="helix" evidence="9">
    <location>
        <begin position="55"/>
        <end position="57"/>
    </location>
</feature>
<feature type="strand" evidence="9">
    <location>
        <begin position="60"/>
        <end position="65"/>
    </location>
</feature>
<feature type="strand" evidence="9">
    <location>
        <begin position="68"/>
        <end position="74"/>
    </location>
</feature>
<feature type="strand" evidence="9">
    <location>
        <begin position="80"/>
        <end position="86"/>
    </location>
</feature>
<feature type="helix" evidence="9">
    <location>
        <begin position="91"/>
        <end position="93"/>
    </location>
</feature>
<feature type="strand" evidence="9">
    <location>
        <begin position="95"/>
        <end position="103"/>
    </location>
</feature>
<feature type="turn" evidence="9">
    <location>
        <begin position="104"/>
        <end position="106"/>
    </location>
</feature>
<feature type="strand" evidence="9">
    <location>
        <begin position="107"/>
        <end position="110"/>
    </location>
</feature>
<feature type="strand" evidence="9">
    <location>
        <begin position="114"/>
        <end position="119"/>
    </location>
</feature>
<dbReference type="EMBL" id="AY392763">
    <property type="protein sequence ID" value="AAR32125.1"/>
    <property type="molecule type" value="mRNA"/>
</dbReference>
<dbReference type="EMBL" id="AY392764">
    <property type="protein sequence ID" value="AAR32126.1"/>
    <property type="molecule type" value="mRNA"/>
</dbReference>
<dbReference type="EMBL" id="AY392765">
    <property type="protein sequence ID" value="AAR32127.1"/>
    <property type="molecule type" value="mRNA"/>
</dbReference>
<dbReference type="EMBL" id="AY392766">
    <property type="protein sequence ID" value="AAR32128.1"/>
    <property type="molecule type" value="mRNA"/>
</dbReference>
<dbReference type="EMBL" id="AK017222">
    <property type="protein sequence ID" value="BAC25505.1"/>
    <property type="status" value="ALT_FRAME"/>
    <property type="molecule type" value="mRNA"/>
</dbReference>
<dbReference type="EMBL" id="AK033472">
    <property type="protein sequence ID" value="BAC28306.1"/>
    <property type="molecule type" value="mRNA"/>
</dbReference>
<dbReference type="EMBL" id="AK038574">
    <property type="protein sequence ID" value="BAC30051.1"/>
    <property type="molecule type" value="mRNA"/>
</dbReference>
<dbReference type="EMBL" id="AK043664">
    <property type="protein sequence ID" value="BAC31610.1"/>
    <property type="status" value="ALT_SEQ"/>
    <property type="molecule type" value="mRNA"/>
</dbReference>
<dbReference type="EMBL" id="AK044465">
    <property type="protein sequence ID" value="BAC31936.1"/>
    <property type="molecule type" value="mRNA"/>
</dbReference>
<dbReference type="EMBL" id="AK050281">
    <property type="protein sequence ID" value="BAC34164.1"/>
    <property type="molecule type" value="mRNA"/>
</dbReference>
<dbReference type="EMBL" id="AK054158">
    <property type="protein sequence ID" value="BAC35674.1"/>
    <property type="status" value="ALT_SEQ"/>
    <property type="molecule type" value="mRNA"/>
</dbReference>
<dbReference type="EMBL" id="BC025901">
    <property type="protein sequence ID" value="AAH25901.1"/>
    <property type="molecule type" value="mRNA"/>
</dbReference>
<dbReference type="CCDS" id="CCDS20729.1">
    <molecule id="Q8BG84-2"/>
</dbReference>
<dbReference type="CCDS" id="CCDS51969.1">
    <molecule id="Q8BG84-1"/>
</dbReference>
<dbReference type="CCDS" id="CCDS80654.1">
    <molecule id="Q8BG84-6"/>
</dbReference>
<dbReference type="CCDS" id="CCDS85202.1">
    <molecule id="Q8BG84-5"/>
</dbReference>
<dbReference type="RefSeq" id="NP_001106945.1">
    <molecule id="Q8BG84-1"/>
    <property type="nucleotide sequence ID" value="NM_001113474.1"/>
</dbReference>
<dbReference type="RefSeq" id="NP_001289604.1">
    <molecule id="Q8BG84-6"/>
    <property type="nucleotide sequence ID" value="NM_001302675.1"/>
</dbReference>
<dbReference type="RefSeq" id="NP_001289605.1">
    <property type="nucleotide sequence ID" value="NM_001302676.1"/>
</dbReference>
<dbReference type="RefSeq" id="NP_001289606.1">
    <molecule id="Q8BG84-5"/>
    <property type="nucleotide sequence ID" value="NM_001302677.1"/>
</dbReference>
<dbReference type="RefSeq" id="NP_001289610.1">
    <property type="nucleotide sequence ID" value="NM_001302681.1"/>
</dbReference>
<dbReference type="RefSeq" id="NP_001289611.1">
    <property type="nucleotide sequence ID" value="NM_001302682.1"/>
</dbReference>
<dbReference type="RefSeq" id="NP_001289612.1">
    <property type="nucleotide sequence ID" value="NM_001302683.1"/>
</dbReference>
<dbReference type="RefSeq" id="NP_848726.1">
    <molecule id="Q8BG84-2"/>
    <property type="nucleotide sequence ID" value="NM_178611.6"/>
</dbReference>
<dbReference type="RefSeq" id="XP_006540238.1">
    <molecule id="Q8BG84-1"/>
    <property type="nucleotide sequence ID" value="XM_006540175.4"/>
</dbReference>
<dbReference type="RefSeq" id="XP_006540239.1">
    <molecule id="Q8BG84-1"/>
    <property type="nucleotide sequence ID" value="XM_006540176.4"/>
</dbReference>
<dbReference type="RefSeq" id="XP_017177847.1">
    <property type="nucleotide sequence ID" value="XM_017322358.1"/>
</dbReference>
<dbReference type="RefSeq" id="XP_017177848.1">
    <property type="nucleotide sequence ID" value="XM_017322359.1"/>
</dbReference>
<dbReference type="PDB" id="4ESK">
    <property type="method" value="X-ray"/>
    <property type="resolution" value="1.76 A"/>
    <property type="chains" value="A/B/C/D=22-121"/>
</dbReference>
<dbReference type="PDB" id="4ETY">
    <property type="method" value="X-ray"/>
    <property type="resolution" value="1.90 A"/>
    <property type="chains" value="A/B/C/D=22-133"/>
</dbReference>
<dbReference type="PDBsum" id="4ESK"/>
<dbReference type="PDBsum" id="4ETY"/>
<dbReference type="SMR" id="Q8BG84"/>
<dbReference type="DIP" id="DIP-61634N"/>
<dbReference type="FunCoup" id="Q8BG84">
    <property type="interactions" value="283"/>
</dbReference>
<dbReference type="IntAct" id="Q8BG84">
    <property type="interactions" value="1"/>
</dbReference>
<dbReference type="STRING" id="10090.ENSMUSP00000083589"/>
<dbReference type="GlyCosmos" id="Q8BG84">
    <property type="glycosylation" value="2 sites, No reported glycans"/>
</dbReference>
<dbReference type="GlyGen" id="Q8BG84">
    <property type="glycosylation" value="3 sites"/>
</dbReference>
<dbReference type="PhosphoSitePlus" id="Q8BG84"/>
<dbReference type="PaxDb" id="10090-ENSMUSP00000083589"/>
<dbReference type="ProteomicsDB" id="264825">
    <molecule id="Q8BG84-1"/>
</dbReference>
<dbReference type="ProteomicsDB" id="264826">
    <molecule id="Q8BG84-2"/>
</dbReference>
<dbReference type="ProteomicsDB" id="264828">
    <molecule id="Q8BG84-5"/>
</dbReference>
<dbReference type="ProteomicsDB" id="264829">
    <molecule id="Q8BG84-6"/>
</dbReference>
<dbReference type="Antibodypedia" id="2596">
    <property type="antibodies" value="832 antibodies from 36 providers"/>
</dbReference>
<dbReference type="DNASU" id="52855"/>
<dbReference type="Ensembl" id="ENSMUST00000068865.13">
    <molecule id="Q8BG84-2"/>
    <property type="protein sequence ID" value="ENSMUSP00000070712.6"/>
    <property type="gene ID" value="ENSMUSG00000055541.20"/>
</dbReference>
<dbReference type="Ensembl" id="ENSMUST00000086401.10">
    <molecule id="Q8BG84-1"/>
    <property type="protein sequence ID" value="ENSMUSP00000083589.4"/>
    <property type="gene ID" value="ENSMUSG00000055541.20"/>
</dbReference>
<dbReference type="Ensembl" id="ENSMUST00000108600.9">
    <molecule id="Q8BG84-6"/>
    <property type="protein sequence ID" value="ENSMUSP00000104241.3"/>
    <property type="gene ID" value="ENSMUSG00000055541.20"/>
</dbReference>
<dbReference type="Ensembl" id="ENSMUST00000131126.3">
    <molecule id="Q8BG84-3"/>
    <property type="protein sequence ID" value="ENSMUSP00000121738.2"/>
    <property type="gene ID" value="ENSMUSG00000055541.20"/>
</dbReference>
<dbReference type="Ensembl" id="ENSMUST00000136616.8">
    <molecule id="Q8BG84-3"/>
    <property type="protein sequence ID" value="ENSMUSP00000122037.2"/>
    <property type="gene ID" value="ENSMUSG00000055541.20"/>
</dbReference>
<dbReference type="Ensembl" id="ENSMUST00000149395.8">
    <molecule id="Q8BG84-3"/>
    <property type="protein sequence ID" value="ENSMUSP00000116800.2"/>
    <property type="gene ID" value="ENSMUSG00000055541.20"/>
</dbReference>
<dbReference type="Ensembl" id="ENSMUST00000205296.2">
    <molecule id="Q8BG84-5"/>
    <property type="protein sequence ID" value="ENSMUSP00000145940.2"/>
    <property type="gene ID" value="ENSMUSG00000055541.20"/>
</dbReference>
<dbReference type="GeneID" id="52855"/>
<dbReference type="KEGG" id="mmu:52855"/>
<dbReference type="UCSC" id="uc009ews.2">
    <molecule id="Q8BG84-2"/>
    <property type="organism name" value="mouse"/>
</dbReference>
<dbReference type="UCSC" id="uc009ewt.2">
    <molecule id="Q8BG84-1"/>
    <property type="organism name" value="mouse"/>
</dbReference>
<dbReference type="UCSC" id="uc012ewk.1">
    <molecule id="Q8BG84-5"/>
    <property type="organism name" value="mouse"/>
</dbReference>
<dbReference type="UCSC" id="uc012ewl.1">
    <molecule id="Q8BG84-6"/>
    <property type="organism name" value="mouse"/>
</dbReference>
<dbReference type="AGR" id="MGI:105492"/>
<dbReference type="CTD" id="3903"/>
<dbReference type="MGI" id="MGI:105492">
    <property type="gene designation" value="Lair1"/>
</dbReference>
<dbReference type="VEuPathDB" id="HostDB:ENSMUSG00000055541"/>
<dbReference type="eggNOG" id="ENOG502TBGD">
    <property type="taxonomic scope" value="Eukaryota"/>
</dbReference>
<dbReference type="GeneTree" id="ENSGT00940000162693"/>
<dbReference type="HOGENOM" id="CLU_1712690_0_0_1"/>
<dbReference type="InParanoid" id="Q8BG84"/>
<dbReference type="OMA" id="CIYQIES"/>
<dbReference type="OrthoDB" id="9838250at2759"/>
<dbReference type="PhylomeDB" id="Q8BG84"/>
<dbReference type="Reactome" id="R-MMU-198933">
    <property type="pathway name" value="Immunoregulatory interactions between a Lymphoid and a non-Lymphoid cell"/>
</dbReference>
<dbReference type="Reactome" id="R-MMU-6798695">
    <property type="pathway name" value="Neutrophil degranulation"/>
</dbReference>
<dbReference type="BioGRID-ORCS" id="52855">
    <property type="hits" value="0 hits in 78 CRISPR screens"/>
</dbReference>
<dbReference type="ChiTaRS" id="Lair1">
    <property type="organism name" value="mouse"/>
</dbReference>
<dbReference type="EvolutionaryTrace" id="Q8BG84"/>
<dbReference type="PRO" id="PR:Q8BG84"/>
<dbReference type="Proteomes" id="UP000000589">
    <property type="component" value="Chromosome 7"/>
</dbReference>
<dbReference type="RNAct" id="Q8BG84">
    <property type="molecule type" value="protein"/>
</dbReference>
<dbReference type="Bgee" id="ENSMUSG00000055541">
    <property type="expression patterns" value="Expressed in granulocyte and 112 other cell types or tissues"/>
</dbReference>
<dbReference type="ExpressionAtlas" id="Q8BG84">
    <property type="expression patterns" value="baseline and differential"/>
</dbReference>
<dbReference type="GO" id="GO:0005886">
    <property type="term" value="C:plasma membrane"/>
    <property type="evidence" value="ECO:0007669"/>
    <property type="project" value="UniProtKB-SubCell"/>
</dbReference>
<dbReference type="GO" id="GO:0007166">
    <property type="term" value="P:cell surface receptor signaling pathway"/>
    <property type="evidence" value="ECO:0007669"/>
    <property type="project" value="UniProtKB-ARBA"/>
</dbReference>
<dbReference type="Gene3D" id="2.60.40.10">
    <property type="entry name" value="Immunoglobulins"/>
    <property type="match status" value="1"/>
</dbReference>
<dbReference type="InterPro" id="IPR007110">
    <property type="entry name" value="Ig-like_dom"/>
</dbReference>
<dbReference type="InterPro" id="IPR036179">
    <property type="entry name" value="Ig-like_dom_sf"/>
</dbReference>
<dbReference type="InterPro" id="IPR013783">
    <property type="entry name" value="Ig-like_fold"/>
</dbReference>
<dbReference type="InterPro" id="IPR050412">
    <property type="entry name" value="Ig-like_Receptors_ImmuneReg"/>
</dbReference>
<dbReference type="InterPro" id="IPR013151">
    <property type="entry name" value="Immunoglobulin_dom"/>
</dbReference>
<dbReference type="PANTHER" id="PTHR11738:SF129">
    <property type="entry name" value="LEUKOCYTE-ASSOCIATED IMMUNOGLOBULIN-LIKE RECEPTOR 1"/>
    <property type="match status" value="1"/>
</dbReference>
<dbReference type="PANTHER" id="PTHR11738">
    <property type="entry name" value="MHC CLASS I NK CELL RECEPTOR"/>
    <property type="match status" value="1"/>
</dbReference>
<dbReference type="Pfam" id="PF00047">
    <property type="entry name" value="ig"/>
    <property type="match status" value="1"/>
</dbReference>
<dbReference type="SUPFAM" id="SSF48726">
    <property type="entry name" value="Immunoglobulin"/>
    <property type="match status" value="1"/>
</dbReference>
<dbReference type="PROSITE" id="PS50835">
    <property type="entry name" value="IG_LIKE"/>
    <property type="match status" value="1"/>
</dbReference>
<name>LAIR1_MOUSE</name>
<protein>
    <recommendedName>
        <fullName>Leukocyte-associated immunoglobulin-like receptor 1</fullName>
        <shortName>LAIR-1</shortName>
        <shortName>mLAIR1</shortName>
    </recommendedName>
    <cdAntigenName>CD305</cdAntigenName>
</protein>